<sequence>MSKSFTFKQFHIDIGSCGMPVSTDGVLLGAWTNISECSQILDIGAGTGLLSLMSAQRNSNAHIDAIELMPIAAEVARLNFSQSPWKERLVLIHQDFLSYQTAYEYDAIICNPPYFNNGEQSLKGERSTARHTDSLPFDKLLQHCKTLISSTGRASFILPVFEGEIFIKIAKGCDFHLTKITKVKTTEKKSPTRLLIELSLFPHIYQESTLTIHDGNGYSDDFIKLTRMFYLNMG</sequence>
<evidence type="ECO:0000255" key="1">
    <source>
        <dbReference type="HAMAP-Rule" id="MF_01872"/>
    </source>
</evidence>
<organism>
    <name type="scientific">Aliivibrio fischeri (strain MJ11)</name>
    <name type="common">Vibrio fischeri</name>
    <dbReference type="NCBI Taxonomy" id="388396"/>
    <lineage>
        <taxon>Bacteria</taxon>
        <taxon>Pseudomonadati</taxon>
        <taxon>Pseudomonadota</taxon>
        <taxon>Gammaproteobacteria</taxon>
        <taxon>Vibrionales</taxon>
        <taxon>Vibrionaceae</taxon>
        <taxon>Aliivibrio</taxon>
    </lineage>
</organism>
<proteinExistence type="inferred from homology"/>
<keyword id="KW-0963">Cytoplasm</keyword>
<keyword id="KW-0489">Methyltransferase</keyword>
<keyword id="KW-0949">S-adenosyl-L-methionine</keyword>
<keyword id="KW-0808">Transferase</keyword>
<keyword id="KW-0819">tRNA processing</keyword>
<gene>
    <name type="ordered locus">VFMJ11_0445</name>
</gene>
<comment type="function">
    <text evidence="1">Specifically methylates the adenine in position 37 of tRNA(1)(Val) (anticodon cmo5UAC).</text>
</comment>
<comment type="catalytic activity">
    <reaction evidence="1">
        <text>adenosine(37) in tRNA1(Val) + S-adenosyl-L-methionine = N(6)-methyladenosine(37) in tRNA1(Val) + S-adenosyl-L-homocysteine + H(+)</text>
        <dbReference type="Rhea" id="RHEA:43160"/>
        <dbReference type="Rhea" id="RHEA-COMP:10369"/>
        <dbReference type="Rhea" id="RHEA-COMP:10370"/>
        <dbReference type="ChEBI" id="CHEBI:15378"/>
        <dbReference type="ChEBI" id="CHEBI:57856"/>
        <dbReference type="ChEBI" id="CHEBI:59789"/>
        <dbReference type="ChEBI" id="CHEBI:74411"/>
        <dbReference type="ChEBI" id="CHEBI:74449"/>
        <dbReference type="EC" id="2.1.1.223"/>
    </reaction>
</comment>
<comment type="subcellular location">
    <subcellularLocation>
        <location evidence="1">Cytoplasm</location>
    </subcellularLocation>
</comment>
<comment type="similarity">
    <text evidence="1">Belongs to the methyltransferase superfamily. tRNA (adenine-N(6)-)-methyltransferase family.</text>
</comment>
<reference key="1">
    <citation type="submission" date="2008-08" db="EMBL/GenBank/DDBJ databases">
        <title>Complete sequence of Vibrio fischeri strain MJ11.</title>
        <authorList>
            <person name="Mandel M.J."/>
            <person name="Stabb E.V."/>
            <person name="Ruby E.G."/>
            <person name="Ferriera S."/>
            <person name="Johnson J."/>
            <person name="Kravitz S."/>
            <person name="Beeson K."/>
            <person name="Sutton G."/>
            <person name="Rogers Y.-H."/>
            <person name="Friedman R."/>
            <person name="Frazier M."/>
            <person name="Venter J.C."/>
        </authorList>
    </citation>
    <scope>NUCLEOTIDE SEQUENCE [LARGE SCALE GENOMIC DNA]</scope>
    <source>
        <strain>MJ11</strain>
    </source>
</reference>
<feature type="chain" id="PRO_0000387444" description="tRNA1(Val) (adenine(37)-N6)-methyltransferase">
    <location>
        <begin position="1"/>
        <end position="234"/>
    </location>
</feature>
<protein>
    <recommendedName>
        <fullName evidence="1">tRNA1(Val) (adenine(37)-N6)-methyltransferase</fullName>
        <ecNumber evidence="1">2.1.1.223</ecNumber>
    </recommendedName>
    <alternativeName>
        <fullName evidence="1">tRNA m6A37 methyltransferase</fullName>
    </alternativeName>
</protein>
<accession>B5F9T8</accession>
<dbReference type="EC" id="2.1.1.223" evidence="1"/>
<dbReference type="EMBL" id="CP001139">
    <property type="protein sequence ID" value="ACH65486.1"/>
    <property type="molecule type" value="Genomic_DNA"/>
</dbReference>
<dbReference type="RefSeq" id="WP_012533086.1">
    <property type="nucleotide sequence ID" value="NC_011184.1"/>
</dbReference>
<dbReference type="SMR" id="B5F9T8"/>
<dbReference type="KEGG" id="vfm:VFMJ11_0445"/>
<dbReference type="HOGENOM" id="CLU_061983_0_0_6"/>
<dbReference type="Proteomes" id="UP000001857">
    <property type="component" value="Chromosome I"/>
</dbReference>
<dbReference type="GO" id="GO:0005737">
    <property type="term" value="C:cytoplasm"/>
    <property type="evidence" value="ECO:0007669"/>
    <property type="project" value="UniProtKB-SubCell"/>
</dbReference>
<dbReference type="GO" id="GO:0003676">
    <property type="term" value="F:nucleic acid binding"/>
    <property type="evidence" value="ECO:0007669"/>
    <property type="project" value="InterPro"/>
</dbReference>
<dbReference type="GO" id="GO:0016430">
    <property type="term" value="F:tRNA (adenine-N6)-methyltransferase activity"/>
    <property type="evidence" value="ECO:0007669"/>
    <property type="project" value="UniProtKB-UniRule"/>
</dbReference>
<dbReference type="GO" id="GO:0032259">
    <property type="term" value="P:methylation"/>
    <property type="evidence" value="ECO:0007669"/>
    <property type="project" value="UniProtKB-KW"/>
</dbReference>
<dbReference type="GO" id="GO:0008033">
    <property type="term" value="P:tRNA processing"/>
    <property type="evidence" value="ECO:0007669"/>
    <property type="project" value="UniProtKB-UniRule"/>
</dbReference>
<dbReference type="CDD" id="cd02440">
    <property type="entry name" value="AdoMet_MTases"/>
    <property type="match status" value="1"/>
</dbReference>
<dbReference type="Gene3D" id="3.40.50.150">
    <property type="entry name" value="Vaccinia Virus protein VP39"/>
    <property type="match status" value="1"/>
</dbReference>
<dbReference type="HAMAP" id="MF_01872">
    <property type="entry name" value="tRNA_methyltr_YfiC"/>
    <property type="match status" value="1"/>
</dbReference>
<dbReference type="InterPro" id="IPR002052">
    <property type="entry name" value="DNA_methylase_N6_adenine_CS"/>
</dbReference>
<dbReference type="InterPro" id="IPR029063">
    <property type="entry name" value="SAM-dependent_MTases_sf"/>
</dbReference>
<dbReference type="InterPro" id="IPR007848">
    <property type="entry name" value="Small_mtfrase_dom"/>
</dbReference>
<dbReference type="InterPro" id="IPR050210">
    <property type="entry name" value="tRNA_Adenine-N(6)_MTase"/>
</dbReference>
<dbReference type="InterPro" id="IPR022882">
    <property type="entry name" value="tRNA_adenine-N6_MeTrfase"/>
</dbReference>
<dbReference type="PANTHER" id="PTHR47739">
    <property type="entry name" value="TRNA1(VAL) (ADENINE(37)-N6)-METHYLTRANSFERASE"/>
    <property type="match status" value="1"/>
</dbReference>
<dbReference type="PANTHER" id="PTHR47739:SF1">
    <property type="entry name" value="TRNA1(VAL) (ADENINE(37)-N6)-METHYLTRANSFERASE"/>
    <property type="match status" value="1"/>
</dbReference>
<dbReference type="Pfam" id="PF05175">
    <property type="entry name" value="MTS"/>
    <property type="match status" value="1"/>
</dbReference>
<dbReference type="PRINTS" id="PR00507">
    <property type="entry name" value="N12N6MTFRASE"/>
</dbReference>
<dbReference type="SUPFAM" id="SSF53335">
    <property type="entry name" value="S-adenosyl-L-methionine-dependent methyltransferases"/>
    <property type="match status" value="1"/>
</dbReference>
<dbReference type="PROSITE" id="PS00092">
    <property type="entry name" value="N6_MTASE"/>
    <property type="match status" value="1"/>
</dbReference>
<name>TRMN6_ALIFM</name>